<protein>
    <recommendedName>
        <fullName evidence="1">Large ribosomal subunit protein bL27</fullName>
    </recommendedName>
    <alternativeName>
        <fullName evidence="3">50S ribosomal protein L27</fullName>
    </alternativeName>
</protein>
<feature type="chain" id="PRO_1000146512" description="Large ribosomal subunit protein bL27">
    <location>
        <begin position="1"/>
        <end position="84"/>
    </location>
</feature>
<feature type="region of interest" description="Disordered" evidence="2">
    <location>
        <begin position="1"/>
        <end position="21"/>
    </location>
</feature>
<evidence type="ECO:0000255" key="1">
    <source>
        <dbReference type="HAMAP-Rule" id="MF_00539"/>
    </source>
</evidence>
<evidence type="ECO:0000256" key="2">
    <source>
        <dbReference type="SAM" id="MobiDB-lite"/>
    </source>
</evidence>
<evidence type="ECO:0000305" key="3"/>
<proteinExistence type="inferred from homology"/>
<gene>
    <name evidence="1" type="primary">rpmA</name>
    <name type="ordered locus">BHWA1_01201</name>
</gene>
<accession>C0R0P3</accession>
<reference key="1">
    <citation type="journal article" date="2009" name="PLoS ONE">
        <title>Genome sequence of the pathogenic intestinal spirochete Brachyspira hyodysenteriae reveals adaptations to its lifestyle in the porcine large intestine.</title>
        <authorList>
            <person name="Bellgard M.I."/>
            <person name="Wanchanthuek P."/>
            <person name="La T."/>
            <person name="Ryan K."/>
            <person name="Moolhuijzen P."/>
            <person name="Albertyn Z."/>
            <person name="Shaban B."/>
            <person name="Motro Y."/>
            <person name="Dunn D.S."/>
            <person name="Schibeci D."/>
            <person name="Hunter A."/>
            <person name="Barrero R."/>
            <person name="Phillips N.D."/>
            <person name="Hampson D.J."/>
        </authorList>
    </citation>
    <scope>NUCLEOTIDE SEQUENCE [LARGE SCALE GENOMIC DNA]</scope>
    <source>
        <strain>ATCC 49526 / WA1</strain>
    </source>
</reference>
<dbReference type="EMBL" id="CP001357">
    <property type="protein sequence ID" value="ACN83681.1"/>
    <property type="molecule type" value="Genomic_DNA"/>
</dbReference>
<dbReference type="RefSeq" id="WP_012670728.1">
    <property type="nucleotide sequence ID" value="NC_012225.1"/>
</dbReference>
<dbReference type="SMR" id="C0R0P3"/>
<dbReference type="STRING" id="565034.BHWA1_01201"/>
<dbReference type="GeneID" id="63962302"/>
<dbReference type="KEGG" id="bhy:BHWA1_01201"/>
<dbReference type="eggNOG" id="COG0211">
    <property type="taxonomic scope" value="Bacteria"/>
</dbReference>
<dbReference type="HOGENOM" id="CLU_095424_4_0_12"/>
<dbReference type="Proteomes" id="UP000001803">
    <property type="component" value="Chromosome"/>
</dbReference>
<dbReference type="GO" id="GO:0022625">
    <property type="term" value="C:cytosolic large ribosomal subunit"/>
    <property type="evidence" value="ECO:0007669"/>
    <property type="project" value="TreeGrafter"/>
</dbReference>
<dbReference type="GO" id="GO:0003735">
    <property type="term" value="F:structural constituent of ribosome"/>
    <property type="evidence" value="ECO:0007669"/>
    <property type="project" value="InterPro"/>
</dbReference>
<dbReference type="GO" id="GO:0006412">
    <property type="term" value="P:translation"/>
    <property type="evidence" value="ECO:0007669"/>
    <property type="project" value="UniProtKB-UniRule"/>
</dbReference>
<dbReference type="FunFam" id="2.40.50.100:FF:000020">
    <property type="entry name" value="50S ribosomal protein L27"/>
    <property type="match status" value="1"/>
</dbReference>
<dbReference type="Gene3D" id="2.40.50.100">
    <property type="match status" value="1"/>
</dbReference>
<dbReference type="HAMAP" id="MF_00539">
    <property type="entry name" value="Ribosomal_bL27"/>
    <property type="match status" value="1"/>
</dbReference>
<dbReference type="InterPro" id="IPR001684">
    <property type="entry name" value="Ribosomal_bL27"/>
</dbReference>
<dbReference type="InterPro" id="IPR018261">
    <property type="entry name" value="Ribosomal_bL27_CS"/>
</dbReference>
<dbReference type="NCBIfam" id="TIGR00062">
    <property type="entry name" value="L27"/>
    <property type="match status" value="1"/>
</dbReference>
<dbReference type="PANTHER" id="PTHR15893:SF0">
    <property type="entry name" value="LARGE RIBOSOMAL SUBUNIT PROTEIN BL27M"/>
    <property type="match status" value="1"/>
</dbReference>
<dbReference type="PANTHER" id="PTHR15893">
    <property type="entry name" value="RIBOSOMAL PROTEIN L27"/>
    <property type="match status" value="1"/>
</dbReference>
<dbReference type="Pfam" id="PF01016">
    <property type="entry name" value="Ribosomal_L27"/>
    <property type="match status" value="1"/>
</dbReference>
<dbReference type="PRINTS" id="PR00063">
    <property type="entry name" value="RIBOSOMALL27"/>
</dbReference>
<dbReference type="SUPFAM" id="SSF110324">
    <property type="entry name" value="Ribosomal L27 protein-like"/>
    <property type="match status" value="1"/>
</dbReference>
<dbReference type="PROSITE" id="PS00831">
    <property type="entry name" value="RIBOSOMAL_L27"/>
    <property type="match status" value="1"/>
</dbReference>
<sequence>MAHKKGGGSSKNGRDSQSKRLGVKVYGGQKVISGNIIVRQRGTQFHAGRNVDIGRDHTIFATASGYVKFHTNKFGKKTISVVTE</sequence>
<organism>
    <name type="scientific">Brachyspira hyodysenteriae (strain ATCC 49526 / WA1)</name>
    <dbReference type="NCBI Taxonomy" id="565034"/>
    <lineage>
        <taxon>Bacteria</taxon>
        <taxon>Pseudomonadati</taxon>
        <taxon>Spirochaetota</taxon>
        <taxon>Spirochaetia</taxon>
        <taxon>Brachyspirales</taxon>
        <taxon>Brachyspiraceae</taxon>
        <taxon>Brachyspira</taxon>
    </lineage>
</organism>
<keyword id="KW-0687">Ribonucleoprotein</keyword>
<keyword id="KW-0689">Ribosomal protein</keyword>
<comment type="similarity">
    <text evidence="1">Belongs to the bacterial ribosomal protein bL27 family.</text>
</comment>
<name>RL27_BRAHW</name>